<sequence length="447" mass="49910">MTTILKHLPVGQRIGIAFSGGLDTSAALLWMRQKGAVPYAYTANLGQPDEEDYDAIPRRAMEYGAENARLIDCRKQLVAEGIAAIQCGAFHNTTGGLTYFNTTPLGRAVTGTMLVAAMKEDGVNIWGDGSTYKGNDIERFYRYGLLTNAELQIYKPWLDTDFIDELGGRHEMSEFMIACGFDYKMSVEKAYSTDSNMLGATHEAKDLEYLNSSVKIVNPIMGVKFWDESVKIPAEEVTVRFEQGHPVALNGKTFSDDVEMLLEANRIGGRHGLGMSDQIENRIIEAKSRGIYEAPGMALLHIAYERLLTGIHNEDTIEQYHAHGRQLGRLLYQGRWFDSQALMLRDSLQRWVASQITGEVTLELRRGNDYSILNTVSENLTYKPERLTMEKGDSVFSPDDRIGQLTMRNLDITDTREKLFGYAKTGLLSSSATSGVPQVENLENKGQ</sequence>
<reference key="1">
    <citation type="journal article" date="2007" name="J. Bacteriol.">
        <title>The genome sequence of avian pathogenic Escherichia coli strain O1:K1:H7 shares strong similarities with human extraintestinal pathogenic E. coli genomes.</title>
        <authorList>
            <person name="Johnson T.J."/>
            <person name="Kariyawasam S."/>
            <person name="Wannemuehler Y."/>
            <person name="Mangiamele P."/>
            <person name="Johnson S.J."/>
            <person name="Doetkott C."/>
            <person name="Skyberg J.A."/>
            <person name="Lynne A.M."/>
            <person name="Johnson J.R."/>
            <person name="Nolan L.K."/>
        </authorList>
    </citation>
    <scope>NUCLEOTIDE SEQUENCE [LARGE SCALE GENOMIC DNA]</scope>
</reference>
<keyword id="KW-0028">Amino-acid biosynthesis</keyword>
<keyword id="KW-0055">Arginine biosynthesis</keyword>
<keyword id="KW-0067">ATP-binding</keyword>
<keyword id="KW-0963">Cytoplasm</keyword>
<keyword id="KW-0436">Ligase</keyword>
<keyword id="KW-0547">Nucleotide-binding</keyword>
<keyword id="KW-1185">Reference proteome</keyword>
<evidence type="ECO:0000255" key="1">
    <source>
        <dbReference type="HAMAP-Rule" id="MF_00581"/>
    </source>
</evidence>
<name>ASSY_ECOK1</name>
<organism>
    <name type="scientific">Escherichia coli O1:K1 / APEC</name>
    <dbReference type="NCBI Taxonomy" id="405955"/>
    <lineage>
        <taxon>Bacteria</taxon>
        <taxon>Pseudomonadati</taxon>
        <taxon>Pseudomonadota</taxon>
        <taxon>Gammaproteobacteria</taxon>
        <taxon>Enterobacterales</taxon>
        <taxon>Enterobacteriaceae</taxon>
        <taxon>Escherichia</taxon>
    </lineage>
</organism>
<comment type="catalytic activity">
    <reaction evidence="1">
        <text>L-citrulline + L-aspartate + ATP = 2-(N(omega)-L-arginino)succinate + AMP + diphosphate + H(+)</text>
        <dbReference type="Rhea" id="RHEA:10932"/>
        <dbReference type="ChEBI" id="CHEBI:15378"/>
        <dbReference type="ChEBI" id="CHEBI:29991"/>
        <dbReference type="ChEBI" id="CHEBI:30616"/>
        <dbReference type="ChEBI" id="CHEBI:33019"/>
        <dbReference type="ChEBI" id="CHEBI:57472"/>
        <dbReference type="ChEBI" id="CHEBI:57743"/>
        <dbReference type="ChEBI" id="CHEBI:456215"/>
        <dbReference type="EC" id="6.3.4.5"/>
    </reaction>
</comment>
<comment type="pathway">
    <text evidence="1">Amino-acid biosynthesis; L-arginine biosynthesis; L-arginine from L-ornithine and carbamoyl phosphate: step 2/3.</text>
</comment>
<comment type="subunit">
    <text evidence="1">Homotetramer.</text>
</comment>
<comment type="subcellular location">
    <subcellularLocation>
        <location evidence="1">Cytoplasm</location>
    </subcellularLocation>
</comment>
<comment type="similarity">
    <text evidence="1">Belongs to the argininosuccinate synthase family. Type 2 subfamily.</text>
</comment>
<gene>
    <name evidence="1" type="primary">argG</name>
    <name type="ordered locus">Ecok1_31720</name>
    <name type="ORF">APECO1_3259</name>
</gene>
<dbReference type="EC" id="6.3.4.5" evidence="1"/>
<dbReference type="EMBL" id="CP000468">
    <property type="protein sequence ID" value="ABJ02666.1"/>
    <property type="molecule type" value="Genomic_DNA"/>
</dbReference>
<dbReference type="RefSeq" id="WP_000207671.1">
    <property type="nucleotide sequence ID" value="NZ_CADILS010000003.1"/>
</dbReference>
<dbReference type="SMR" id="A1AG76"/>
<dbReference type="KEGG" id="ecv:APECO1_3259"/>
<dbReference type="HOGENOM" id="CLU_032784_4_1_6"/>
<dbReference type="UniPathway" id="UPA00068">
    <property type="reaction ID" value="UER00113"/>
</dbReference>
<dbReference type="Proteomes" id="UP000008216">
    <property type="component" value="Chromosome"/>
</dbReference>
<dbReference type="GO" id="GO:0005737">
    <property type="term" value="C:cytoplasm"/>
    <property type="evidence" value="ECO:0007669"/>
    <property type="project" value="UniProtKB-SubCell"/>
</dbReference>
<dbReference type="GO" id="GO:0004055">
    <property type="term" value="F:argininosuccinate synthase activity"/>
    <property type="evidence" value="ECO:0007669"/>
    <property type="project" value="UniProtKB-UniRule"/>
</dbReference>
<dbReference type="GO" id="GO:0005524">
    <property type="term" value="F:ATP binding"/>
    <property type="evidence" value="ECO:0007669"/>
    <property type="project" value="UniProtKB-UniRule"/>
</dbReference>
<dbReference type="GO" id="GO:0042803">
    <property type="term" value="F:protein homodimerization activity"/>
    <property type="evidence" value="ECO:0007669"/>
    <property type="project" value="InterPro"/>
</dbReference>
<dbReference type="GO" id="GO:0000053">
    <property type="term" value="P:argininosuccinate metabolic process"/>
    <property type="evidence" value="ECO:0007669"/>
    <property type="project" value="TreeGrafter"/>
</dbReference>
<dbReference type="GO" id="GO:0006526">
    <property type="term" value="P:L-arginine biosynthetic process"/>
    <property type="evidence" value="ECO:0007669"/>
    <property type="project" value="UniProtKB-UniRule"/>
</dbReference>
<dbReference type="GO" id="GO:0000050">
    <property type="term" value="P:urea cycle"/>
    <property type="evidence" value="ECO:0007669"/>
    <property type="project" value="TreeGrafter"/>
</dbReference>
<dbReference type="CDD" id="cd01999">
    <property type="entry name" value="ASS"/>
    <property type="match status" value="1"/>
</dbReference>
<dbReference type="FunFam" id="1.10.287.400:FF:000001">
    <property type="entry name" value="Argininosuccinate synthase"/>
    <property type="match status" value="1"/>
</dbReference>
<dbReference type="Gene3D" id="1.10.287.400">
    <property type="match status" value="1"/>
</dbReference>
<dbReference type="Gene3D" id="3.90.1260.10">
    <property type="entry name" value="Argininosuccinate synthetase, chain A, domain 2"/>
    <property type="match status" value="1"/>
</dbReference>
<dbReference type="Gene3D" id="3.40.50.620">
    <property type="entry name" value="HUPs"/>
    <property type="match status" value="1"/>
</dbReference>
<dbReference type="HAMAP" id="MF_00581">
    <property type="entry name" value="Arg_succ_synth_type2"/>
    <property type="match status" value="1"/>
</dbReference>
<dbReference type="InterPro" id="IPR023437">
    <property type="entry name" value="Arg_succ_synth_type2_subfam"/>
</dbReference>
<dbReference type="InterPro" id="IPR048268">
    <property type="entry name" value="Arginosuc_syn_C"/>
</dbReference>
<dbReference type="InterPro" id="IPR048267">
    <property type="entry name" value="Arginosuc_syn_N"/>
</dbReference>
<dbReference type="InterPro" id="IPR001518">
    <property type="entry name" value="Arginosuc_synth"/>
</dbReference>
<dbReference type="InterPro" id="IPR018223">
    <property type="entry name" value="Arginosuc_synth_CS"/>
</dbReference>
<dbReference type="InterPro" id="IPR023434">
    <property type="entry name" value="Arginosuc_synth_type_1_subfam"/>
</dbReference>
<dbReference type="InterPro" id="IPR024074">
    <property type="entry name" value="AS_cat/multimer_dom_body"/>
</dbReference>
<dbReference type="InterPro" id="IPR024073">
    <property type="entry name" value="AS_multimer_C_tail"/>
</dbReference>
<dbReference type="InterPro" id="IPR014729">
    <property type="entry name" value="Rossmann-like_a/b/a_fold"/>
</dbReference>
<dbReference type="NCBIfam" id="TIGR00032">
    <property type="entry name" value="argG"/>
    <property type="match status" value="1"/>
</dbReference>
<dbReference type="NCBIfam" id="NF003779">
    <property type="entry name" value="PRK05370.1"/>
    <property type="match status" value="1"/>
</dbReference>
<dbReference type="PANTHER" id="PTHR11587">
    <property type="entry name" value="ARGININOSUCCINATE SYNTHASE"/>
    <property type="match status" value="1"/>
</dbReference>
<dbReference type="PANTHER" id="PTHR11587:SF2">
    <property type="entry name" value="ARGININOSUCCINATE SYNTHASE"/>
    <property type="match status" value="1"/>
</dbReference>
<dbReference type="Pfam" id="PF20979">
    <property type="entry name" value="Arginosuc_syn_C"/>
    <property type="match status" value="1"/>
</dbReference>
<dbReference type="Pfam" id="PF00764">
    <property type="entry name" value="Arginosuc_synth"/>
    <property type="match status" value="1"/>
</dbReference>
<dbReference type="SUPFAM" id="SSF52402">
    <property type="entry name" value="Adenine nucleotide alpha hydrolases-like"/>
    <property type="match status" value="1"/>
</dbReference>
<dbReference type="SUPFAM" id="SSF69864">
    <property type="entry name" value="Argininosuccinate synthetase, C-terminal domain"/>
    <property type="match status" value="1"/>
</dbReference>
<dbReference type="PROSITE" id="PS00564">
    <property type="entry name" value="ARGININOSUCCIN_SYN_1"/>
    <property type="match status" value="1"/>
</dbReference>
<dbReference type="PROSITE" id="PS00565">
    <property type="entry name" value="ARGININOSUCCIN_SYN_2"/>
    <property type="match status" value="1"/>
</dbReference>
<protein>
    <recommendedName>
        <fullName evidence="1">Argininosuccinate synthase</fullName>
        <ecNumber evidence="1">6.3.4.5</ecNumber>
    </recommendedName>
    <alternativeName>
        <fullName evidence="1">Citrulline--aspartate ligase</fullName>
    </alternativeName>
</protein>
<accession>A1AG76</accession>
<feature type="chain" id="PRO_1000025421" description="Argininosuccinate synthase">
    <location>
        <begin position="1"/>
        <end position="447"/>
    </location>
</feature>
<feature type="binding site" evidence="1">
    <location>
        <begin position="17"/>
        <end position="25"/>
    </location>
    <ligand>
        <name>ATP</name>
        <dbReference type="ChEBI" id="CHEBI:30616"/>
    </ligand>
</feature>
<feature type="binding site" evidence="1">
    <location>
        <position position="43"/>
    </location>
    <ligand>
        <name>ATP</name>
        <dbReference type="ChEBI" id="CHEBI:30616"/>
    </ligand>
</feature>
<feature type="binding site" evidence="1">
    <location>
        <position position="99"/>
    </location>
    <ligand>
        <name>L-citrulline</name>
        <dbReference type="ChEBI" id="CHEBI:57743"/>
    </ligand>
</feature>
<feature type="binding site" evidence="1">
    <location>
        <position position="129"/>
    </location>
    <ligand>
        <name>ATP</name>
        <dbReference type="ChEBI" id="CHEBI:30616"/>
    </ligand>
</feature>
<feature type="binding site" evidence="1">
    <location>
        <position position="131"/>
    </location>
    <ligand>
        <name>ATP</name>
        <dbReference type="ChEBI" id="CHEBI:30616"/>
    </ligand>
</feature>
<feature type="binding site" evidence="1">
    <location>
        <position position="131"/>
    </location>
    <ligand>
        <name>L-aspartate</name>
        <dbReference type="ChEBI" id="CHEBI:29991"/>
    </ligand>
</feature>
<feature type="binding site" evidence="1">
    <location>
        <position position="135"/>
    </location>
    <ligand>
        <name>L-aspartate</name>
        <dbReference type="ChEBI" id="CHEBI:29991"/>
    </ligand>
</feature>
<feature type="binding site" evidence="1">
    <location>
        <position position="135"/>
    </location>
    <ligand>
        <name>L-citrulline</name>
        <dbReference type="ChEBI" id="CHEBI:57743"/>
    </ligand>
</feature>
<feature type="binding site" evidence="1">
    <location>
        <position position="136"/>
    </location>
    <ligand>
        <name>ATP</name>
        <dbReference type="ChEBI" id="CHEBI:30616"/>
    </ligand>
</feature>
<feature type="binding site" evidence="1">
    <location>
        <position position="136"/>
    </location>
    <ligand>
        <name>L-aspartate</name>
        <dbReference type="ChEBI" id="CHEBI:29991"/>
    </ligand>
</feature>
<feature type="binding site" evidence="1">
    <location>
        <position position="139"/>
    </location>
    <ligand>
        <name>L-citrulline</name>
        <dbReference type="ChEBI" id="CHEBI:57743"/>
    </ligand>
</feature>
<feature type="binding site" evidence="1">
    <location>
        <position position="192"/>
    </location>
    <ligand>
        <name>L-citrulline</name>
        <dbReference type="ChEBI" id="CHEBI:57743"/>
    </ligand>
</feature>
<feature type="binding site" evidence="1">
    <location>
        <position position="194"/>
    </location>
    <ligand>
        <name>ATP</name>
        <dbReference type="ChEBI" id="CHEBI:30616"/>
    </ligand>
</feature>
<feature type="binding site" evidence="1">
    <location>
        <position position="201"/>
    </location>
    <ligand>
        <name>L-citrulline</name>
        <dbReference type="ChEBI" id="CHEBI:57743"/>
    </ligand>
</feature>
<feature type="binding site" evidence="1">
    <location>
        <position position="203"/>
    </location>
    <ligand>
        <name>L-citrulline</name>
        <dbReference type="ChEBI" id="CHEBI:57743"/>
    </ligand>
</feature>
<feature type="binding site" evidence="1">
    <location>
        <position position="280"/>
    </location>
    <ligand>
        <name>L-citrulline</name>
        <dbReference type="ChEBI" id="CHEBI:57743"/>
    </ligand>
</feature>
<proteinExistence type="inferred from homology"/>